<evidence type="ECO:0000255" key="1">
    <source>
        <dbReference type="HAMAP-Rule" id="MF_00815"/>
    </source>
</evidence>
<comment type="function">
    <text evidence="1">Produces ATP from ADP in the presence of a proton gradient across the membrane. The gamma chain is believed to be important in regulating ATPase activity and the flow of protons through the CF(0) complex.</text>
</comment>
<comment type="subunit">
    <text evidence="1">F-type ATPases have 2 components, CF(1) - the catalytic core - and CF(0) - the membrane proton channel. CF(1) has five subunits: alpha(3), beta(3), gamma(1), delta(1), epsilon(1). CF(0) has three main subunits: a, b and c.</text>
</comment>
<comment type="subcellular location">
    <subcellularLocation>
        <location evidence="1">Cell membrane</location>
        <topology evidence="1">Peripheral membrane protein</topology>
    </subcellularLocation>
</comment>
<comment type="similarity">
    <text evidence="1">Belongs to the ATPase gamma chain family.</text>
</comment>
<gene>
    <name evidence="1" type="primary">atpG</name>
    <name type="ordered locus">Daud_2138</name>
</gene>
<sequence length="295" mass="33038">MPALRDFRRRIKSVKSTQKICKAMKAVATAKMARAQATVVAARPYARQLHEVLGRVASAARDVQNPLLTVREPKRVCYIVITADRGLCGGFNSNILRTAVKELSKWEEFKLVAVGRKCRNFFRFRDWERDAEFIGLGENIRFEQGQQIARFVINKYIAGEYDAVYMVYSKFVNMLVQQPTVVKLLPVEPPAEEAAEKAGGEEAAAPKKATVDYIFEPSAADVLDYLLPRYVENSVYHGLIESKASEQSARMMAMDAATKNAGEMIDRLTLQMNRLRQEGITKELLDIVGGAAALE</sequence>
<accession>B1I6J8</accession>
<dbReference type="EMBL" id="CP000860">
    <property type="protein sequence ID" value="ACA60625.1"/>
    <property type="molecule type" value="Genomic_DNA"/>
</dbReference>
<dbReference type="RefSeq" id="WP_012303200.1">
    <property type="nucleotide sequence ID" value="NC_010424.1"/>
</dbReference>
<dbReference type="SMR" id="B1I6J8"/>
<dbReference type="STRING" id="477974.Daud_2138"/>
<dbReference type="KEGG" id="dau:Daud_2138"/>
<dbReference type="eggNOG" id="COG0224">
    <property type="taxonomic scope" value="Bacteria"/>
</dbReference>
<dbReference type="HOGENOM" id="CLU_050669_0_1_9"/>
<dbReference type="OrthoDB" id="9812769at2"/>
<dbReference type="Proteomes" id="UP000008544">
    <property type="component" value="Chromosome"/>
</dbReference>
<dbReference type="GO" id="GO:0005886">
    <property type="term" value="C:plasma membrane"/>
    <property type="evidence" value="ECO:0007669"/>
    <property type="project" value="UniProtKB-SubCell"/>
</dbReference>
<dbReference type="GO" id="GO:0045259">
    <property type="term" value="C:proton-transporting ATP synthase complex"/>
    <property type="evidence" value="ECO:0007669"/>
    <property type="project" value="UniProtKB-KW"/>
</dbReference>
<dbReference type="GO" id="GO:0005524">
    <property type="term" value="F:ATP binding"/>
    <property type="evidence" value="ECO:0007669"/>
    <property type="project" value="UniProtKB-UniRule"/>
</dbReference>
<dbReference type="GO" id="GO:0046933">
    <property type="term" value="F:proton-transporting ATP synthase activity, rotational mechanism"/>
    <property type="evidence" value="ECO:0007669"/>
    <property type="project" value="UniProtKB-UniRule"/>
</dbReference>
<dbReference type="GO" id="GO:0042777">
    <property type="term" value="P:proton motive force-driven plasma membrane ATP synthesis"/>
    <property type="evidence" value="ECO:0007669"/>
    <property type="project" value="UniProtKB-UniRule"/>
</dbReference>
<dbReference type="CDD" id="cd12151">
    <property type="entry name" value="F1-ATPase_gamma"/>
    <property type="match status" value="1"/>
</dbReference>
<dbReference type="Gene3D" id="3.40.1380.10">
    <property type="match status" value="1"/>
</dbReference>
<dbReference type="Gene3D" id="1.10.287.80">
    <property type="entry name" value="ATP synthase, gamma subunit, helix hairpin domain"/>
    <property type="match status" value="2"/>
</dbReference>
<dbReference type="HAMAP" id="MF_00815">
    <property type="entry name" value="ATP_synth_gamma_bact"/>
    <property type="match status" value="1"/>
</dbReference>
<dbReference type="InterPro" id="IPR035968">
    <property type="entry name" value="ATP_synth_F1_ATPase_gsu"/>
</dbReference>
<dbReference type="InterPro" id="IPR000131">
    <property type="entry name" value="ATP_synth_F1_gsu"/>
</dbReference>
<dbReference type="InterPro" id="IPR023632">
    <property type="entry name" value="ATP_synth_F1_gsu_CS"/>
</dbReference>
<dbReference type="NCBIfam" id="TIGR01146">
    <property type="entry name" value="ATPsyn_F1gamma"/>
    <property type="match status" value="1"/>
</dbReference>
<dbReference type="PANTHER" id="PTHR11693">
    <property type="entry name" value="ATP SYNTHASE GAMMA CHAIN"/>
    <property type="match status" value="1"/>
</dbReference>
<dbReference type="PANTHER" id="PTHR11693:SF22">
    <property type="entry name" value="ATP SYNTHASE SUBUNIT GAMMA, MITOCHONDRIAL"/>
    <property type="match status" value="1"/>
</dbReference>
<dbReference type="Pfam" id="PF00231">
    <property type="entry name" value="ATP-synt"/>
    <property type="match status" value="1"/>
</dbReference>
<dbReference type="PRINTS" id="PR00126">
    <property type="entry name" value="ATPASEGAMMA"/>
</dbReference>
<dbReference type="SUPFAM" id="SSF52943">
    <property type="entry name" value="ATP synthase (F1-ATPase), gamma subunit"/>
    <property type="match status" value="1"/>
</dbReference>
<dbReference type="PROSITE" id="PS00153">
    <property type="entry name" value="ATPASE_GAMMA"/>
    <property type="match status" value="1"/>
</dbReference>
<organism>
    <name type="scientific">Desulforudis audaxviator (strain MP104C)</name>
    <dbReference type="NCBI Taxonomy" id="477974"/>
    <lineage>
        <taxon>Bacteria</taxon>
        <taxon>Bacillati</taxon>
        <taxon>Bacillota</taxon>
        <taxon>Clostridia</taxon>
        <taxon>Thermoanaerobacterales</taxon>
        <taxon>Candidatus Desulforudaceae</taxon>
        <taxon>Candidatus Desulforudis</taxon>
    </lineage>
</organism>
<keyword id="KW-0066">ATP synthesis</keyword>
<keyword id="KW-1003">Cell membrane</keyword>
<keyword id="KW-0139">CF(1)</keyword>
<keyword id="KW-0375">Hydrogen ion transport</keyword>
<keyword id="KW-0406">Ion transport</keyword>
<keyword id="KW-0472">Membrane</keyword>
<keyword id="KW-1185">Reference proteome</keyword>
<keyword id="KW-0813">Transport</keyword>
<reference key="1">
    <citation type="submission" date="2007-10" db="EMBL/GenBank/DDBJ databases">
        <title>Complete sequence of chromosome of Desulforudis audaxviator MP104C.</title>
        <authorList>
            <person name="Copeland A."/>
            <person name="Lucas S."/>
            <person name="Lapidus A."/>
            <person name="Barry K."/>
            <person name="Glavina del Rio T."/>
            <person name="Dalin E."/>
            <person name="Tice H."/>
            <person name="Bruce D."/>
            <person name="Pitluck S."/>
            <person name="Lowry S.R."/>
            <person name="Larimer F."/>
            <person name="Land M.L."/>
            <person name="Hauser L."/>
            <person name="Kyrpides N."/>
            <person name="Ivanova N.N."/>
            <person name="Richardson P."/>
        </authorList>
    </citation>
    <scope>NUCLEOTIDE SEQUENCE [LARGE SCALE GENOMIC DNA]</scope>
    <source>
        <strain>MP104C</strain>
    </source>
</reference>
<feature type="chain" id="PRO_1000134137" description="ATP synthase gamma chain">
    <location>
        <begin position="1"/>
        <end position="295"/>
    </location>
</feature>
<name>ATPG_DESAP</name>
<proteinExistence type="inferred from homology"/>
<protein>
    <recommendedName>
        <fullName evidence="1">ATP synthase gamma chain</fullName>
    </recommendedName>
    <alternativeName>
        <fullName evidence="1">ATP synthase F1 sector gamma subunit</fullName>
    </alternativeName>
    <alternativeName>
        <fullName evidence="1">F-ATPase gamma subunit</fullName>
    </alternativeName>
</protein>